<sequence length="287" mass="31882">MGNQKLKWTAEEEEALLAGIRKHGPGKWKNILRDPEFADQLIHRSNIDLKDKWRNLSVPPGTQSLTNKARPAKVKEEGDTPAADANDAVTIPRPIPTIPPPPGRRTLPSELIPDENTKNAPRYDGVIFEALSALADGNGSDVSSIYHFIEPRHEVPPNFRRILSTRLRRLAAQSKLEKVSTFKSIQNFYKIPDPSGTKIGVPKPKETHTKLRQANNQTSADSQQMIEEAAITAACKVVEAENKIDVAKLAAEEFEKMTKIAEENRKLLVIATEMHELCSCGETMLLA</sequence>
<proteinExistence type="evidence at transcript level"/>
<keyword id="KW-0025">Alternative splicing</keyword>
<keyword id="KW-0158">Chromosome</keyword>
<keyword id="KW-0175">Coiled coil</keyword>
<keyword id="KW-0238">DNA-binding</keyword>
<keyword id="KW-0539">Nucleus</keyword>
<keyword id="KW-1185">Reference proteome</keyword>
<keyword id="KW-0804">Transcription</keyword>
<keyword id="KW-0805">Transcription regulation</keyword>
<name>TRB5_ARATH</name>
<feature type="chain" id="PRO_0000417014" description="Telomere repeat-binding factor 5">
    <location>
        <begin position="1"/>
        <end position="287"/>
    </location>
</feature>
<feature type="domain" description="HTH myb-type" evidence="3">
    <location>
        <begin position="1"/>
        <end position="62"/>
    </location>
</feature>
<feature type="domain" description="H15" evidence="4">
    <location>
        <begin position="119"/>
        <end position="193"/>
    </location>
</feature>
<feature type="DNA-binding region" description="H-T-H motif" evidence="3">
    <location>
        <begin position="28"/>
        <end position="58"/>
    </location>
</feature>
<feature type="region of interest" description="Disordered" evidence="5">
    <location>
        <begin position="58"/>
        <end position="107"/>
    </location>
</feature>
<feature type="coiled-coil region" evidence="2">
    <location>
        <begin position="233"/>
        <end position="259"/>
    </location>
</feature>
<feature type="compositionally biased region" description="Pro residues" evidence="5">
    <location>
        <begin position="93"/>
        <end position="103"/>
    </location>
</feature>
<feature type="splice variant" id="VSP_043172" description="In isoform 2." evidence="6">
    <original>P</original>
    <variation>V</variation>
    <location>
        <position position="151"/>
    </location>
</feature>
<feature type="splice variant" id="VSP_043173" description="In isoform 2." evidence="6">
    <location>
        <begin position="152"/>
        <end position="287"/>
    </location>
</feature>
<feature type="sequence conflict" description="In Ref. 3; AAM70558/AAK50065." evidence="7" ref="3">
    <original>G</original>
    <variation>E</variation>
    <location>
        <position position="19"/>
    </location>
</feature>
<evidence type="ECO:0000250" key="1"/>
<evidence type="ECO:0000255" key="2"/>
<evidence type="ECO:0000255" key="3">
    <source>
        <dbReference type="PROSITE-ProRule" id="PRU00625"/>
    </source>
</evidence>
<evidence type="ECO:0000255" key="4">
    <source>
        <dbReference type="PROSITE-ProRule" id="PRU00837"/>
    </source>
</evidence>
<evidence type="ECO:0000256" key="5">
    <source>
        <dbReference type="SAM" id="MobiDB-lite"/>
    </source>
</evidence>
<evidence type="ECO:0000303" key="6">
    <source>
    </source>
</evidence>
<evidence type="ECO:0000305" key="7"/>
<reference key="1">
    <citation type="journal article" date="2000" name="Nature">
        <title>Sequence and analysis of chromosome 1 of the plant Arabidopsis thaliana.</title>
        <authorList>
            <person name="Theologis A."/>
            <person name="Ecker J.R."/>
            <person name="Palm C.J."/>
            <person name="Federspiel N.A."/>
            <person name="Kaul S."/>
            <person name="White O."/>
            <person name="Alonso J."/>
            <person name="Altafi H."/>
            <person name="Araujo R."/>
            <person name="Bowman C.L."/>
            <person name="Brooks S.Y."/>
            <person name="Buehler E."/>
            <person name="Chan A."/>
            <person name="Chao Q."/>
            <person name="Chen H."/>
            <person name="Cheuk R.F."/>
            <person name="Chin C.W."/>
            <person name="Chung M.K."/>
            <person name="Conn L."/>
            <person name="Conway A.B."/>
            <person name="Conway A.R."/>
            <person name="Creasy T.H."/>
            <person name="Dewar K."/>
            <person name="Dunn P."/>
            <person name="Etgu P."/>
            <person name="Feldblyum T.V."/>
            <person name="Feng J.-D."/>
            <person name="Fong B."/>
            <person name="Fujii C.Y."/>
            <person name="Gill J.E."/>
            <person name="Goldsmith A.D."/>
            <person name="Haas B."/>
            <person name="Hansen N.F."/>
            <person name="Hughes B."/>
            <person name="Huizar L."/>
            <person name="Hunter J.L."/>
            <person name="Jenkins J."/>
            <person name="Johnson-Hopson C."/>
            <person name="Khan S."/>
            <person name="Khaykin E."/>
            <person name="Kim C.J."/>
            <person name="Koo H.L."/>
            <person name="Kremenetskaia I."/>
            <person name="Kurtz D.B."/>
            <person name="Kwan A."/>
            <person name="Lam B."/>
            <person name="Langin-Hooper S."/>
            <person name="Lee A."/>
            <person name="Lee J.M."/>
            <person name="Lenz C.A."/>
            <person name="Li J.H."/>
            <person name="Li Y.-P."/>
            <person name="Lin X."/>
            <person name="Liu S.X."/>
            <person name="Liu Z.A."/>
            <person name="Luros J.S."/>
            <person name="Maiti R."/>
            <person name="Marziali A."/>
            <person name="Militscher J."/>
            <person name="Miranda M."/>
            <person name="Nguyen M."/>
            <person name="Nierman W.C."/>
            <person name="Osborne B.I."/>
            <person name="Pai G."/>
            <person name="Peterson J."/>
            <person name="Pham P.K."/>
            <person name="Rizzo M."/>
            <person name="Rooney T."/>
            <person name="Rowley D."/>
            <person name="Sakano H."/>
            <person name="Salzberg S.L."/>
            <person name="Schwartz J.R."/>
            <person name="Shinn P."/>
            <person name="Southwick A.M."/>
            <person name="Sun H."/>
            <person name="Tallon L.J."/>
            <person name="Tambunga G."/>
            <person name="Toriumi M.J."/>
            <person name="Town C.D."/>
            <person name="Utterback T."/>
            <person name="Van Aken S."/>
            <person name="Vaysberg M."/>
            <person name="Vysotskaia V.S."/>
            <person name="Walker M."/>
            <person name="Wu D."/>
            <person name="Yu G."/>
            <person name="Fraser C.M."/>
            <person name="Venter J.C."/>
            <person name="Davis R.W."/>
        </authorList>
    </citation>
    <scope>NUCLEOTIDE SEQUENCE [LARGE SCALE GENOMIC DNA]</scope>
    <source>
        <strain>cv. Columbia</strain>
    </source>
</reference>
<reference key="2">
    <citation type="journal article" date="2017" name="Plant J.">
        <title>Araport11: a complete reannotation of the Arabidopsis thaliana reference genome.</title>
        <authorList>
            <person name="Cheng C.Y."/>
            <person name="Krishnakumar V."/>
            <person name="Chan A.P."/>
            <person name="Thibaud-Nissen F."/>
            <person name="Schobel S."/>
            <person name="Town C.D."/>
        </authorList>
    </citation>
    <scope>GENOME REANNOTATION</scope>
    <source>
        <strain>cv. Columbia</strain>
    </source>
</reference>
<reference key="3">
    <citation type="journal article" date="2003" name="Science">
        <title>Empirical analysis of transcriptional activity in the Arabidopsis genome.</title>
        <authorList>
            <person name="Yamada K."/>
            <person name="Lim J."/>
            <person name="Dale J.M."/>
            <person name="Chen H."/>
            <person name="Shinn P."/>
            <person name="Palm C.J."/>
            <person name="Southwick A.M."/>
            <person name="Wu H.C."/>
            <person name="Kim C.J."/>
            <person name="Nguyen M."/>
            <person name="Pham P.K."/>
            <person name="Cheuk R.F."/>
            <person name="Karlin-Newmann G."/>
            <person name="Liu S.X."/>
            <person name="Lam B."/>
            <person name="Sakano H."/>
            <person name="Wu T."/>
            <person name="Yu G."/>
            <person name="Miranda M."/>
            <person name="Quach H.L."/>
            <person name="Tripp M."/>
            <person name="Chang C.H."/>
            <person name="Lee J.M."/>
            <person name="Toriumi M.J."/>
            <person name="Chan M.M."/>
            <person name="Tang C.C."/>
            <person name="Onodera C.S."/>
            <person name="Deng J.M."/>
            <person name="Akiyama K."/>
            <person name="Ansari Y."/>
            <person name="Arakawa T."/>
            <person name="Banh J."/>
            <person name="Banno F."/>
            <person name="Bowser L."/>
            <person name="Brooks S.Y."/>
            <person name="Carninci P."/>
            <person name="Chao Q."/>
            <person name="Choy N."/>
            <person name="Enju A."/>
            <person name="Goldsmith A.D."/>
            <person name="Gurjal M."/>
            <person name="Hansen N.F."/>
            <person name="Hayashizaki Y."/>
            <person name="Johnson-Hopson C."/>
            <person name="Hsuan V.W."/>
            <person name="Iida K."/>
            <person name="Karnes M."/>
            <person name="Khan S."/>
            <person name="Koesema E."/>
            <person name="Ishida J."/>
            <person name="Jiang P.X."/>
            <person name="Jones T."/>
            <person name="Kawai J."/>
            <person name="Kamiya A."/>
            <person name="Meyers C."/>
            <person name="Nakajima M."/>
            <person name="Narusaka M."/>
            <person name="Seki M."/>
            <person name="Sakurai T."/>
            <person name="Satou M."/>
            <person name="Tamse R."/>
            <person name="Vaysberg M."/>
            <person name="Wallender E.K."/>
            <person name="Wong C."/>
            <person name="Yamamura Y."/>
            <person name="Yuan S."/>
            <person name="Shinozaki K."/>
            <person name="Davis R.W."/>
            <person name="Theologis A."/>
            <person name="Ecker J.R."/>
        </authorList>
    </citation>
    <scope>NUCLEOTIDE SEQUENCE [LARGE SCALE MRNA] (ISOFORM 2)</scope>
    <source>
        <strain>cv. Columbia</strain>
    </source>
</reference>
<reference key="4">
    <citation type="journal article" date="2003" name="Plant Physiol.">
        <title>The maize Single myb histone 1 gene, Smh1, belongs to a novel gene family and encodes a protein that binds telomere DNA repeats in vitro.</title>
        <authorList>
            <person name="Marian C.O."/>
            <person name="Bordoli S.J."/>
            <person name="Goltz M."/>
            <person name="Santarella R.A."/>
            <person name="Jackson L.P."/>
            <person name="Danilevskaya O."/>
            <person name="Beckstette M."/>
            <person name="Meeley R."/>
            <person name="Bass H.W."/>
        </authorList>
    </citation>
    <scope>GENE FAMILY</scope>
</reference>
<reference key="5">
    <citation type="journal article" date="2006" name="Plant Mol. Biol.">
        <title>The MYB transcription factor superfamily of Arabidopsis: expression analysis and phylogenetic comparison with the rice MYB family.</title>
        <authorList>
            <person name="Chen Y."/>
            <person name="Yang X."/>
            <person name="He K."/>
            <person name="Liu M."/>
            <person name="Li J."/>
            <person name="Gao Z."/>
            <person name="Lin Z."/>
            <person name="Zhang Y."/>
            <person name="Wang X."/>
            <person name="Qiu X."/>
            <person name="Shen Y."/>
            <person name="Zhang L."/>
            <person name="Deng X."/>
            <person name="Luo J."/>
            <person name="Deng X.-W."/>
            <person name="Chen Z."/>
            <person name="Gu H."/>
            <person name="Qu L.-J."/>
        </authorList>
    </citation>
    <scope>GENE FAMILY</scope>
</reference>
<protein>
    <recommendedName>
        <fullName>Telomere repeat-binding factor 5</fullName>
    </recommendedName>
    <alternativeName>
        <fullName>MYB transcription factor</fullName>
    </alternativeName>
</protein>
<organism>
    <name type="scientific">Arabidopsis thaliana</name>
    <name type="common">Mouse-ear cress</name>
    <dbReference type="NCBI Taxonomy" id="3702"/>
    <lineage>
        <taxon>Eukaryota</taxon>
        <taxon>Viridiplantae</taxon>
        <taxon>Streptophyta</taxon>
        <taxon>Embryophyta</taxon>
        <taxon>Tracheophyta</taxon>
        <taxon>Spermatophyta</taxon>
        <taxon>Magnoliopsida</taxon>
        <taxon>eudicotyledons</taxon>
        <taxon>Gunneridae</taxon>
        <taxon>Pentapetalae</taxon>
        <taxon>rosids</taxon>
        <taxon>malvids</taxon>
        <taxon>Brassicales</taxon>
        <taxon>Brassicaceae</taxon>
        <taxon>Camelineae</taxon>
        <taxon>Arabidopsis</taxon>
    </lineage>
</organism>
<gene>
    <name type="ordered locus">At1g72740</name>
    <name type="ORF">F28P22.7</name>
</gene>
<dbReference type="EMBL" id="AC010926">
    <property type="protein sequence ID" value="AAG51858.1"/>
    <property type="status" value="ALT_SEQ"/>
    <property type="molecule type" value="Genomic_DNA"/>
</dbReference>
<dbReference type="EMBL" id="CP002684">
    <property type="protein sequence ID" value="AEE35366.1"/>
    <property type="molecule type" value="Genomic_DNA"/>
</dbReference>
<dbReference type="EMBL" id="AF372925">
    <property type="protein sequence ID" value="AAK50065.1"/>
    <property type="molecule type" value="mRNA"/>
</dbReference>
<dbReference type="EMBL" id="AY124849">
    <property type="protein sequence ID" value="AAM70558.1"/>
    <property type="molecule type" value="mRNA"/>
</dbReference>
<dbReference type="PIR" id="C96752">
    <property type="entry name" value="C96752"/>
</dbReference>
<dbReference type="RefSeq" id="NP_177418.2">
    <molecule id="F4IEY4-1"/>
    <property type="nucleotide sequence ID" value="NM_105933.3"/>
</dbReference>
<dbReference type="SMR" id="F4IEY4"/>
<dbReference type="BioGRID" id="28825">
    <property type="interactions" value="8"/>
</dbReference>
<dbReference type="FunCoup" id="F4IEY4">
    <property type="interactions" value="663"/>
</dbReference>
<dbReference type="STRING" id="3702.F4IEY4"/>
<dbReference type="GlyGen" id="F4IEY4">
    <property type="glycosylation" value="1 site"/>
</dbReference>
<dbReference type="iPTMnet" id="F4IEY4"/>
<dbReference type="PaxDb" id="3702-AT1G72740.1"/>
<dbReference type="ProteomicsDB" id="228338">
    <molecule id="F4IEY4-1"/>
</dbReference>
<dbReference type="EnsemblPlants" id="AT1G72740.1">
    <molecule id="F4IEY4-1"/>
    <property type="protein sequence ID" value="AT1G72740.1"/>
    <property type="gene ID" value="AT1G72740"/>
</dbReference>
<dbReference type="GeneID" id="843606"/>
<dbReference type="Gramene" id="AT1G72740.1">
    <molecule id="F4IEY4-1"/>
    <property type="protein sequence ID" value="AT1G72740.1"/>
    <property type="gene ID" value="AT1G72740"/>
</dbReference>
<dbReference type="KEGG" id="ath:AT1G72740"/>
<dbReference type="Araport" id="AT1G72740"/>
<dbReference type="TAIR" id="AT1G72740"/>
<dbReference type="eggNOG" id="ENOG502QTN3">
    <property type="taxonomic scope" value="Eukaryota"/>
</dbReference>
<dbReference type="InParanoid" id="F4IEY4"/>
<dbReference type="OrthoDB" id="608866at2759"/>
<dbReference type="PRO" id="PR:F4IEY4"/>
<dbReference type="Proteomes" id="UP000006548">
    <property type="component" value="Chromosome 1"/>
</dbReference>
<dbReference type="ExpressionAtlas" id="F4IEY4">
    <property type="expression patterns" value="baseline and differential"/>
</dbReference>
<dbReference type="GO" id="GO:0000786">
    <property type="term" value="C:nucleosome"/>
    <property type="evidence" value="ECO:0007669"/>
    <property type="project" value="InterPro"/>
</dbReference>
<dbReference type="GO" id="GO:0005634">
    <property type="term" value="C:nucleus"/>
    <property type="evidence" value="ECO:0007005"/>
    <property type="project" value="TAIR"/>
</dbReference>
<dbReference type="GO" id="GO:0003700">
    <property type="term" value="F:DNA-binding transcription factor activity"/>
    <property type="evidence" value="ECO:0000250"/>
    <property type="project" value="TAIR"/>
</dbReference>
<dbReference type="GO" id="GO:0003691">
    <property type="term" value="F:double-stranded telomeric DNA binding"/>
    <property type="evidence" value="ECO:0007669"/>
    <property type="project" value="InterPro"/>
</dbReference>
<dbReference type="GO" id="GO:0006334">
    <property type="term" value="P:nucleosome assembly"/>
    <property type="evidence" value="ECO:0007669"/>
    <property type="project" value="InterPro"/>
</dbReference>
<dbReference type="CDD" id="cd11660">
    <property type="entry name" value="SANT_TRF"/>
    <property type="match status" value="1"/>
</dbReference>
<dbReference type="FunFam" id="1.10.10.60:FF:000168">
    <property type="entry name" value="Telomere repeat-binding factor 1"/>
    <property type="match status" value="1"/>
</dbReference>
<dbReference type="FunFam" id="1.10.10.10:FF:001355">
    <property type="entry name" value="Telomere repeat-binding factor 5"/>
    <property type="match status" value="1"/>
</dbReference>
<dbReference type="Gene3D" id="1.10.10.60">
    <property type="entry name" value="Homeodomain-like"/>
    <property type="match status" value="1"/>
</dbReference>
<dbReference type="Gene3D" id="1.10.10.10">
    <property type="entry name" value="Winged helix-like DNA-binding domain superfamily/Winged helix DNA-binding domain"/>
    <property type="match status" value="1"/>
</dbReference>
<dbReference type="InterPro" id="IPR005818">
    <property type="entry name" value="Histone_H1/H5_H15"/>
</dbReference>
<dbReference type="InterPro" id="IPR009057">
    <property type="entry name" value="Homeodomain-like_sf"/>
</dbReference>
<dbReference type="InterPro" id="IPR017930">
    <property type="entry name" value="Myb_dom"/>
</dbReference>
<dbReference type="InterPro" id="IPR001005">
    <property type="entry name" value="SANT/Myb"/>
</dbReference>
<dbReference type="InterPro" id="IPR044597">
    <property type="entry name" value="SMH1-6"/>
</dbReference>
<dbReference type="InterPro" id="IPR036388">
    <property type="entry name" value="WH-like_DNA-bd_sf"/>
</dbReference>
<dbReference type="InterPro" id="IPR036390">
    <property type="entry name" value="WH_DNA-bd_sf"/>
</dbReference>
<dbReference type="PANTHER" id="PTHR46267">
    <property type="entry name" value="SINGLE MYB HISTONE 4"/>
    <property type="match status" value="1"/>
</dbReference>
<dbReference type="PANTHER" id="PTHR46267:SF3">
    <property type="entry name" value="TELOMERE REPEAT-BINDING FACTOR 4-RELATED"/>
    <property type="match status" value="1"/>
</dbReference>
<dbReference type="Pfam" id="PF00538">
    <property type="entry name" value="Linker_histone"/>
    <property type="match status" value="1"/>
</dbReference>
<dbReference type="Pfam" id="PF00249">
    <property type="entry name" value="Myb_DNA-binding"/>
    <property type="match status" value="1"/>
</dbReference>
<dbReference type="SMART" id="SM00526">
    <property type="entry name" value="H15"/>
    <property type="match status" value="1"/>
</dbReference>
<dbReference type="SMART" id="SM00717">
    <property type="entry name" value="SANT"/>
    <property type="match status" value="1"/>
</dbReference>
<dbReference type="SUPFAM" id="SSF46689">
    <property type="entry name" value="Homeodomain-like"/>
    <property type="match status" value="1"/>
</dbReference>
<dbReference type="SUPFAM" id="SSF46785">
    <property type="entry name" value="Winged helix' DNA-binding domain"/>
    <property type="match status" value="1"/>
</dbReference>
<dbReference type="PROSITE" id="PS51504">
    <property type="entry name" value="H15"/>
    <property type="match status" value="1"/>
</dbReference>
<dbReference type="PROSITE" id="PS51294">
    <property type="entry name" value="HTH_MYB"/>
    <property type="match status" value="1"/>
</dbReference>
<accession>F4IEY4</accession>
<accession>Q94JU9</accession>
<accession>Q9CAI8</accession>
<comment type="function">
    <text evidence="1">Binds preferentially double-stranded telomeric repeats.</text>
</comment>
<comment type="subcellular location">
    <subcellularLocation>
        <location evidence="3 4">Nucleus</location>
    </subcellularLocation>
    <subcellularLocation>
        <location evidence="4">Chromosome</location>
    </subcellularLocation>
</comment>
<comment type="alternative products">
    <event type="alternative splicing"/>
    <isoform>
        <id>F4IEY4-1</id>
        <name>1</name>
        <sequence type="displayed"/>
    </isoform>
    <isoform>
        <id>F4IEY4-2</id>
        <name>2</name>
        <sequence type="described" ref="VSP_043172 VSP_043173"/>
    </isoform>
</comment>
<comment type="domain">
    <text evidence="1">HTH myb-type domain confers double-stranded telomeric DNA-binding while the H15 domain is involved in non-specific DNA-protein interaction and multimerization.</text>
</comment>
<comment type="miscellaneous">
    <molecule>Isoform 2</molecule>
    <text evidence="7">May be due to an intron retention.</text>
</comment>
<comment type="similarity">
    <text evidence="4">Belongs to the histone H1/H5 family. SMH subfamily.</text>
</comment>
<comment type="sequence caution" evidence="7">
    <conflict type="erroneous gene model prediction">
        <sequence resource="EMBL-CDS" id="AAG51858"/>
    </conflict>
</comment>